<gene>
    <name evidence="1" type="primary">ndhO</name>
    <name type="ordered locus">SynWH7803_2231</name>
</gene>
<name>NDHO_SYNPW</name>
<dbReference type="EC" id="7.1.1.-" evidence="1"/>
<dbReference type="EMBL" id="CT971583">
    <property type="protein sequence ID" value="CAK24657.1"/>
    <property type="molecule type" value="Genomic_DNA"/>
</dbReference>
<dbReference type="SMR" id="A5GNZ2"/>
<dbReference type="STRING" id="32051.SynWH7803_2231"/>
<dbReference type="KEGG" id="syx:SynWH7803_2231"/>
<dbReference type="eggNOG" id="ENOG5032XZT">
    <property type="taxonomic scope" value="Bacteria"/>
</dbReference>
<dbReference type="HOGENOM" id="CLU_195299_0_0_3"/>
<dbReference type="OrthoDB" id="426633at2"/>
<dbReference type="Proteomes" id="UP000001566">
    <property type="component" value="Chromosome"/>
</dbReference>
<dbReference type="GO" id="GO:0031676">
    <property type="term" value="C:plasma membrane-derived thylakoid membrane"/>
    <property type="evidence" value="ECO:0007669"/>
    <property type="project" value="UniProtKB-SubCell"/>
</dbReference>
<dbReference type="GO" id="GO:0016655">
    <property type="term" value="F:oxidoreductase activity, acting on NAD(P)H, quinone or similar compound as acceptor"/>
    <property type="evidence" value="ECO:0007669"/>
    <property type="project" value="UniProtKB-UniRule"/>
</dbReference>
<dbReference type="GO" id="GO:0048038">
    <property type="term" value="F:quinone binding"/>
    <property type="evidence" value="ECO:0007669"/>
    <property type="project" value="UniProtKB-KW"/>
</dbReference>
<dbReference type="HAMAP" id="MF_01354">
    <property type="entry name" value="NDH1_NDH1O"/>
    <property type="match status" value="1"/>
</dbReference>
<dbReference type="InterPro" id="IPR020905">
    <property type="entry name" value="NdhO"/>
</dbReference>
<dbReference type="Pfam" id="PF11910">
    <property type="entry name" value="NdhO"/>
    <property type="match status" value="1"/>
</dbReference>
<sequence length="85" mass="9128">MAETPSSPAPAAKAPPALKKGALVRVNRAAYEGSVEAGASDPHPPAYIFEGPGELLVVKGTYGQVRWRRPVPDVWLRMDQLEAFS</sequence>
<organism>
    <name type="scientific">Synechococcus sp. (strain WH7803)</name>
    <dbReference type="NCBI Taxonomy" id="32051"/>
    <lineage>
        <taxon>Bacteria</taxon>
        <taxon>Bacillati</taxon>
        <taxon>Cyanobacteriota</taxon>
        <taxon>Cyanophyceae</taxon>
        <taxon>Synechococcales</taxon>
        <taxon>Synechococcaceae</taxon>
        <taxon>Synechococcus</taxon>
    </lineage>
</organism>
<reference key="1">
    <citation type="submission" date="2006-05" db="EMBL/GenBank/DDBJ databases">
        <authorList>
            <consortium name="Genoscope"/>
        </authorList>
    </citation>
    <scope>NUCLEOTIDE SEQUENCE [LARGE SCALE GENOMIC DNA]</scope>
    <source>
        <strain>WH7803</strain>
    </source>
</reference>
<feature type="chain" id="PRO_0000353660" description="NAD(P)H-quinone oxidoreductase subunit O">
    <location>
        <begin position="1"/>
        <end position="85"/>
    </location>
</feature>
<accession>A5GNZ2</accession>
<keyword id="KW-0472">Membrane</keyword>
<keyword id="KW-0520">NAD</keyword>
<keyword id="KW-0521">NADP</keyword>
<keyword id="KW-0618">Plastoquinone</keyword>
<keyword id="KW-0874">Quinone</keyword>
<keyword id="KW-1185">Reference proteome</keyword>
<keyword id="KW-0793">Thylakoid</keyword>
<keyword id="KW-1278">Translocase</keyword>
<keyword id="KW-0813">Transport</keyword>
<protein>
    <recommendedName>
        <fullName evidence="1">NAD(P)H-quinone oxidoreductase subunit O</fullName>
        <ecNumber evidence="1">7.1.1.-</ecNumber>
    </recommendedName>
    <alternativeName>
        <fullName evidence="1">NAD(P)H dehydrogenase I subunit O</fullName>
    </alternativeName>
    <alternativeName>
        <fullName>NDH-1 subunit O</fullName>
    </alternativeName>
    <alternativeName>
        <fullName>NDH-O</fullName>
    </alternativeName>
</protein>
<proteinExistence type="inferred from homology"/>
<evidence type="ECO:0000255" key="1">
    <source>
        <dbReference type="HAMAP-Rule" id="MF_01354"/>
    </source>
</evidence>
<comment type="function">
    <text evidence="1">NDH-1 shuttles electrons from an unknown electron donor, via FMN and iron-sulfur (Fe-S) centers, to quinones in the respiratory and/or the photosynthetic chain. The immediate electron acceptor for the enzyme in this species is believed to be plastoquinone. Couples the redox reaction to proton translocation, and thus conserves the redox energy in a proton gradient. Cyanobacterial NDH-1 also plays a role in inorganic carbon-concentration.</text>
</comment>
<comment type="catalytic activity">
    <reaction evidence="1">
        <text>a plastoquinone + NADH + (n+1) H(+)(in) = a plastoquinol + NAD(+) + n H(+)(out)</text>
        <dbReference type="Rhea" id="RHEA:42608"/>
        <dbReference type="Rhea" id="RHEA-COMP:9561"/>
        <dbReference type="Rhea" id="RHEA-COMP:9562"/>
        <dbReference type="ChEBI" id="CHEBI:15378"/>
        <dbReference type="ChEBI" id="CHEBI:17757"/>
        <dbReference type="ChEBI" id="CHEBI:57540"/>
        <dbReference type="ChEBI" id="CHEBI:57945"/>
        <dbReference type="ChEBI" id="CHEBI:62192"/>
    </reaction>
</comment>
<comment type="catalytic activity">
    <reaction evidence="1">
        <text>a plastoquinone + NADPH + (n+1) H(+)(in) = a plastoquinol + NADP(+) + n H(+)(out)</text>
        <dbReference type="Rhea" id="RHEA:42612"/>
        <dbReference type="Rhea" id="RHEA-COMP:9561"/>
        <dbReference type="Rhea" id="RHEA-COMP:9562"/>
        <dbReference type="ChEBI" id="CHEBI:15378"/>
        <dbReference type="ChEBI" id="CHEBI:17757"/>
        <dbReference type="ChEBI" id="CHEBI:57783"/>
        <dbReference type="ChEBI" id="CHEBI:58349"/>
        <dbReference type="ChEBI" id="CHEBI:62192"/>
    </reaction>
</comment>
<comment type="subunit">
    <text evidence="1">NDH-1 can be composed of about 15 different subunits; different subcomplexes with different compositions have been identified which probably have different functions.</text>
</comment>
<comment type="subcellular location">
    <subcellularLocation>
        <location evidence="1">Cellular thylakoid membrane</location>
        <topology evidence="1">Peripheral membrane protein</topology>
        <orientation evidence="1">Cytoplasmic side</orientation>
    </subcellularLocation>
</comment>
<comment type="similarity">
    <text evidence="1">Belongs to the complex I NdhO subunit family.</text>
</comment>